<reference key="1">
    <citation type="journal article" date="1996" name="Microbiology">
        <title>New genes in the 170 degrees region of the Bacillus subtilis genome encode DNA gyrase subunits, a thioredoxin, a xylanase and an amino acid transporter.</title>
        <authorList>
            <person name="Rose M."/>
            <person name="Entian K.-D."/>
        </authorList>
    </citation>
    <scope>NUCLEOTIDE SEQUENCE [GENOMIC DNA]</scope>
    <source>
        <strain>168</strain>
    </source>
</reference>
<reference key="2">
    <citation type="journal article" date="1997" name="Nature">
        <title>The complete genome sequence of the Gram-positive bacterium Bacillus subtilis.</title>
        <authorList>
            <person name="Kunst F."/>
            <person name="Ogasawara N."/>
            <person name="Moszer I."/>
            <person name="Albertini A.M."/>
            <person name="Alloni G."/>
            <person name="Azevedo V."/>
            <person name="Bertero M.G."/>
            <person name="Bessieres P."/>
            <person name="Bolotin A."/>
            <person name="Borchert S."/>
            <person name="Borriss R."/>
            <person name="Boursier L."/>
            <person name="Brans A."/>
            <person name="Braun M."/>
            <person name="Brignell S.C."/>
            <person name="Bron S."/>
            <person name="Brouillet S."/>
            <person name="Bruschi C.V."/>
            <person name="Caldwell B."/>
            <person name="Capuano V."/>
            <person name="Carter N.M."/>
            <person name="Choi S.-K."/>
            <person name="Codani J.-J."/>
            <person name="Connerton I.F."/>
            <person name="Cummings N.J."/>
            <person name="Daniel R.A."/>
            <person name="Denizot F."/>
            <person name="Devine K.M."/>
            <person name="Duesterhoeft A."/>
            <person name="Ehrlich S.D."/>
            <person name="Emmerson P.T."/>
            <person name="Entian K.-D."/>
            <person name="Errington J."/>
            <person name="Fabret C."/>
            <person name="Ferrari E."/>
            <person name="Foulger D."/>
            <person name="Fritz C."/>
            <person name="Fujita M."/>
            <person name="Fujita Y."/>
            <person name="Fuma S."/>
            <person name="Galizzi A."/>
            <person name="Galleron N."/>
            <person name="Ghim S.-Y."/>
            <person name="Glaser P."/>
            <person name="Goffeau A."/>
            <person name="Golightly E.J."/>
            <person name="Grandi G."/>
            <person name="Guiseppi G."/>
            <person name="Guy B.J."/>
            <person name="Haga K."/>
            <person name="Haiech J."/>
            <person name="Harwood C.R."/>
            <person name="Henaut A."/>
            <person name="Hilbert H."/>
            <person name="Holsappel S."/>
            <person name="Hosono S."/>
            <person name="Hullo M.-F."/>
            <person name="Itaya M."/>
            <person name="Jones L.-M."/>
            <person name="Joris B."/>
            <person name="Karamata D."/>
            <person name="Kasahara Y."/>
            <person name="Klaerr-Blanchard M."/>
            <person name="Klein C."/>
            <person name="Kobayashi Y."/>
            <person name="Koetter P."/>
            <person name="Koningstein G."/>
            <person name="Krogh S."/>
            <person name="Kumano M."/>
            <person name="Kurita K."/>
            <person name="Lapidus A."/>
            <person name="Lardinois S."/>
            <person name="Lauber J."/>
            <person name="Lazarevic V."/>
            <person name="Lee S.-M."/>
            <person name="Levine A."/>
            <person name="Liu H."/>
            <person name="Masuda S."/>
            <person name="Mauel C."/>
            <person name="Medigue C."/>
            <person name="Medina N."/>
            <person name="Mellado R.P."/>
            <person name="Mizuno M."/>
            <person name="Moestl D."/>
            <person name="Nakai S."/>
            <person name="Noback M."/>
            <person name="Noone D."/>
            <person name="O'Reilly M."/>
            <person name="Ogawa K."/>
            <person name="Ogiwara A."/>
            <person name="Oudega B."/>
            <person name="Park S.-H."/>
            <person name="Parro V."/>
            <person name="Pohl T.M."/>
            <person name="Portetelle D."/>
            <person name="Porwollik S."/>
            <person name="Prescott A.M."/>
            <person name="Presecan E."/>
            <person name="Pujic P."/>
            <person name="Purnelle B."/>
            <person name="Rapoport G."/>
            <person name="Rey M."/>
            <person name="Reynolds S."/>
            <person name="Rieger M."/>
            <person name="Rivolta C."/>
            <person name="Rocha E."/>
            <person name="Roche B."/>
            <person name="Rose M."/>
            <person name="Sadaie Y."/>
            <person name="Sato T."/>
            <person name="Scanlan E."/>
            <person name="Schleich S."/>
            <person name="Schroeter R."/>
            <person name="Scoffone F."/>
            <person name="Sekiguchi J."/>
            <person name="Sekowska A."/>
            <person name="Seror S.J."/>
            <person name="Serror P."/>
            <person name="Shin B.-S."/>
            <person name="Soldo B."/>
            <person name="Sorokin A."/>
            <person name="Tacconi E."/>
            <person name="Takagi T."/>
            <person name="Takahashi H."/>
            <person name="Takemaru K."/>
            <person name="Takeuchi M."/>
            <person name="Tamakoshi A."/>
            <person name="Tanaka T."/>
            <person name="Terpstra P."/>
            <person name="Tognoni A."/>
            <person name="Tosato V."/>
            <person name="Uchiyama S."/>
            <person name="Vandenbol M."/>
            <person name="Vannier F."/>
            <person name="Vassarotti A."/>
            <person name="Viari A."/>
            <person name="Wambutt R."/>
            <person name="Wedler E."/>
            <person name="Wedler H."/>
            <person name="Weitzenegger T."/>
            <person name="Winters P."/>
            <person name="Wipat A."/>
            <person name="Yamamoto H."/>
            <person name="Yamane K."/>
            <person name="Yasumoto K."/>
            <person name="Yata K."/>
            <person name="Yoshida K."/>
            <person name="Yoshikawa H.-F."/>
            <person name="Zumstein E."/>
            <person name="Yoshikawa H."/>
            <person name="Danchin A."/>
        </authorList>
    </citation>
    <scope>NUCLEOTIDE SEQUENCE [LARGE SCALE GENOMIC DNA]</scope>
    <source>
        <strain>168</strain>
    </source>
</reference>
<proteinExistence type="predicted"/>
<name>YNET_BACSU</name>
<keyword id="KW-1185">Reference proteome</keyword>
<organism>
    <name type="scientific">Bacillus subtilis (strain 168)</name>
    <dbReference type="NCBI Taxonomy" id="224308"/>
    <lineage>
        <taxon>Bacteria</taxon>
        <taxon>Bacillati</taxon>
        <taxon>Bacillota</taxon>
        <taxon>Bacilli</taxon>
        <taxon>Bacillales</taxon>
        <taxon>Bacillaceae</taxon>
        <taxon>Bacillus</taxon>
    </lineage>
</organism>
<gene>
    <name type="primary">yneT</name>
    <name type="ordered locus">BSU18080</name>
</gene>
<feature type="chain" id="PRO_0000360450" description="Uncharacterized protein YneT">
    <location>
        <begin position="1"/>
        <end position="135"/>
    </location>
</feature>
<dbReference type="EMBL" id="Z73234">
    <property type="protein sequence ID" value="CAA97605.1"/>
    <property type="molecule type" value="Genomic_DNA"/>
</dbReference>
<dbReference type="EMBL" id="AL009126">
    <property type="protein sequence ID" value="CAB13691.1"/>
    <property type="molecule type" value="Genomic_DNA"/>
</dbReference>
<dbReference type="PIR" id="B69892">
    <property type="entry name" value="B69892"/>
</dbReference>
<dbReference type="RefSeq" id="NP_389690.1">
    <property type="nucleotide sequence ID" value="NC_000964.3"/>
</dbReference>
<dbReference type="RefSeq" id="WP_003245606.1">
    <property type="nucleotide sequence ID" value="NZ_OZ025638.1"/>
</dbReference>
<dbReference type="SMR" id="Q45065"/>
<dbReference type="FunCoup" id="Q45065">
    <property type="interactions" value="42"/>
</dbReference>
<dbReference type="STRING" id="224308.BSU18080"/>
<dbReference type="jPOST" id="Q45065"/>
<dbReference type="PaxDb" id="224308-BSU18080"/>
<dbReference type="EnsemblBacteria" id="CAB13691">
    <property type="protein sequence ID" value="CAB13691"/>
    <property type="gene ID" value="BSU_18080"/>
</dbReference>
<dbReference type="GeneID" id="938220"/>
<dbReference type="KEGG" id="bsu:BSU18080"/>
<dbReference type="PATRIC" id="fig|224308.179.peg.1970"/>
<dbReference type="eggNOG" id="COG1832">
    <property type="taxonomic scope" value="Bacteria"/>
</dbReference>
<dbReference type="InParanoid" id="Q45065"/>
<dbReference type="OrthoDB" id="9804695at2"/>
<dbReference type="PhylomeDB" id="Q45065"/>
<dbReference type="BioCyc" id="BSUB:BSU18080-MONOMER"/>
<dbReference type="Proteomes" id="UP000001570">
    <property type="component" value="Chromosome"/>
</dbReference>
<dbReference type="GO" id="GO:0005737">
    <property type="term" value="C:cytoplasm"/>
    <property type="evidence" value="ECO:0000318"/>
    <property type="project" value="GO_Central"/>
</dbReference>
<dbReference type="GO" id="GO:0005829">
    <property type="term" value="C:cytosol"/>
    <property type="evidence" value="ECO:0000318"/>
    <property type="project" value="GO_Central"/>
</dbReference>
<dbReference type="Gene3D" id="3.40.50.720">
    <property type="entry name" value="NAD(P)-binding Rossmann-like Domain"/>
    <property type="match status" value="1"/>
</dbReference>
<dbReference type="InterPro" id="IPR003781">
    <property type="entry name" value="CoA-bd"/>
</dbReference>
<dbReference type="InterPro" id="IPR036291">
    <property type="entry name" value="NAD(P)-bd_dom_sf"/>
</dbReference>
<dbReference type="PANTHER" id="PTHR33303:SF2">
    <property type="entry name" value="COA-BINDING DOMAIN-CONTAINING PROTEIN"/>
    <property type="match status" value="1"/>
</dbReference>
<dbReference type="PANTHER" id="PTHR33303">
    <property type="entry name" value="CYTOPLASMIC PROTEIN-RELATED"/>
    <property type="match status" value="1"/>
</dbReference>
<dbReference type="Pfam" id="PF13380">
    <property type="entry name" value="CoA_binding_2"/>
    <property type="match status" value="1"/>
</dbReference>
<dbReference type="SMART" id="SM00881">
    <property type="entry name" value="CoA_binding"/>
    <property type="match status" value="1"/>
</dbReference>
<dbReference type="SUPFAM" id="SSF51735">
    <property type="entry name" value="NAD(P)-binding Rossmann-fold domains"/>
    <property type="match status" value="1"/>
</dbReference>
<accession>Q45065</accession>
<accession>Q796G5</accession>
<sequence>MQNPSKAEIKEILQRSKRIAVVGLSDRPDRTSHMVSKAMQDAGYEIIPVNPTIDEALGVKAVSSLKEIDGPIDIVNVFRRSEQLPGVAEEFLETDAPVFWAQQGLVNEEAYQMLKEKGRTVIMDLCIKVAHAVTK</sequence>
<protein>
    <recommendedName>
        <fullName>Uncharacterized protein YneT</fullName>
    </recommendedName>
</protein>